<proteinExistence type="inferred from homology"/>
<dbReference type="EC" id="3.5.4.25" evidence="1"/>
<dbReference type="EMBL" id="CU928158">
    <property type="protein sequence ID" value="CAQ89193.1"/>
    <property type="molecule type" value="Genomic_DNA"/>
</dbReference>
<dbReference type="RefSeq" id="WP_001176286.1">
    <property type="nucleotide sequence ID" value="NC_011740.1"/>
</dbReference>
<dbReference type="SMR" id="B7LS01"/>
<dbReference type="GeneID" id="75057286"/>
<dbReference type="KEGG" id="efe:EFER_1677"/>
<dbReference type="HOGENOM" id="CLU_020273_2_1_6"/>
<dbReference type="OrthoDB" id="9793111at2"/>
<dbReference type="UniPathway" id="UPA00275">
    <property type="reaction ID" value="UER00400"/>
</dbReference>
<dbReference type="Proteomes" id="UP000000745">
    <property type="component" value="Chromosome"/>
</dbReference>
<dbReference type="GO" id="GO:0005829">
    <property type="term" value="C:cytosol"/>
    <property type="evidence" value="ECO:0007669"/>
    <property type="project" value="TreeGrafter"/>
</dbReference>
<dbReference type="GO" id="GO:0005525">
    <property type="term" value="F:GTP binding"/>
    <property type="evidence" value="ECO:0007669"/>
    <property type="project" value="UniProtKB-KW"/>
</dbReference>
<dbReference type="GO" id="GO:0003935">
    <property type="term" value="F:GTP cyclohydrolase II activity"/>
    <property type="evidence" value="ECO:0007669"/>
    <property type="project" value="UniProtKB-UniRule"/>
</dbReference>
<dbReference type="GO" id="GO:0008270">
    <property type="term" value="F:zinc ion binding"/>
    <property type="evidence" value="ECO:0007669"/>
    <property type="project" value="UniProtKB-UniRule"/>
</dbReference>
<dbReference type="GO" id="GO:0009231">
    <property type="term" value="P:riboflavin biosynthetic process"/>
    <property type="evidence" value="ECO:0007669"/>
    <property type="project" value="UniProtKB-UniRule"/>
</dbReference>
<dbReference type="CDD" id="cd00641">
    <property type="entry name" value="GTP_cyclohydro2"/>
    <property type="match status" value="1"/>
</dbReference>
<dbReference type="FunFam" id="3.40.50.10990:FF:000002">
    <property type="entry name" value="GTP cyclohydrolase-2"/>
    <property type="match status" value="1"/>
</dbReference>
<dbReference type="Gene3D" id="3.40.50.10990">
    <property type="entry name" value="GTP cyclohydrolase II"/>
    <property type="match status" value="1"/>
</dbReference>
<dbReference type="HAMAP" id="MF_00179">
    <property type="entry name" value="RibA"/>
    <property type="match status" value="1"/>
</dbReference>
<dbReference type="InterPro" id="IPR032677">
    <property type="entry name" value="GTP_cyclohydro_II"/>
</dbReference>
<dbReference type="InterPro" id="IPR000926">
    <property type="entry name" value="RibA"/>
</dbReference>
<dbReference type="InterPro" id="IPR036144">
    <property type="entry name" value="RibA-like_sf"/>
</dbReference>
<dbReference type="NCBIfam" id="NF001591">
    <property type="entry name" value="PRK00393.1"/>
    <property type="match status" value="1"/>
</dbReference>
<dbReference type="NCBIfam" id="TIGR00505">
    <property type="entry name" value="ribA"/>
    <property type="match status" value="1"/>
</dbReference>
<dbReference type="PANTHER" id="PTHR21327:SF18">
    <property type="entry name" value="3,4-DIHYDROXY-2-BUTANONE 4-PHOSPHATE SYNTHASE"/>
    <property type="match status" value="1"/>
</dbReference>
<dbReference type="PANTHER" id="PTHR21327">
    <property type="entry name" value="GTP CYCLOHYDROLASE II-RELATED"/>
    <property type="match status" value="1"/>
</dbReference>
<dbReference type="Pfam" id="PF00925">
    <property type="entry name" value="GTP_cyclohydro2"/>
    <property type="match status" value="1"/>
</dbReference>
<dbReference type="SUPFAM" id="SSF142695">
    <property type="entry name" value="RibA-like"/>
    <property type="match status" value="1"/>
</dbReference>
<accession>B7LS01</accession>
<protein>
    <recommendedName>
        <fullName evidence="1">GTP cyclohydrolase-2</fullName>
        <ecNumber evidence="1">3.5.4.25</ecNumber>
    </recommendedName>
    <alternativeName>
        <fullName evidence="1">GTP cyclohydrolase II</fullName>
    </alternativeName>
</protein>
<organism>
    <name type="scientific">Escherichia fergusonii (strain ATCC 35469 / DSM 13698 / CCUG 18766 / IAM 14443 / JCM 21226 / LMG 7866 / NBRC 102419 / NCTC 12128 / CDC 0568-73)</name>
    <dbReference type="NCBI Taxonomy" id="585054"/>
    <lineage>
        <taxon>Bacteria</taxon>
        <taxon>Pseudomonadati</taxon>
        <taxon>Pseudomonadota</taxon>
        <taxon>Gammaproteobacteria</taxon>
        <taxon>Enterobacterales</taxon>
        <taxon>Enterobacteriaceae</taxon>
        <taxon>Escherichia</taxon>
    </lineage>
</organism>
<gene>
    <name evidence="1" type="primary">ribA</name>
    <name type="ordered locus">EFER_1677</name>
</gene>
<name>RIBA_ESCF3</name>
<sequence length="198" mass="21834">MQLKRVAEAKLPTPWGDFLMVGFEELATGHDHVALVFGDISGQTPVLARVHSECLTGDALFSLRCDCGFQLEAALTHIAEEGRGILLYHRQEGRNIGLLNKIRAYALQDQGYDTVEANHQLGFAADERDFTLCADMFKLLGVDAVRLLTNNPKKVEILTEAGINIVERVPLIVGRNPKNAHYLDTKAAKMGHLLGKTE</sequence>
<feature type="chain" id="PRO_1000118431" description="GTP cyclohydrolase-2">
    <location>
        <begin position="1"/>
        <end position="198"/>
    </location>
</feature>
<feature type="active site" description="Proton acceptor" evidence="1">
    <location>
        <position position="126"/>
    </location>
</feature>
<feature type="active site" description="Nucleophile" evidence="1">
    <location>
        <position position="128"/>
    </location>
</feature>
<feature type="binding site" evidence="1">
    <location>
        <begin position="49"/>
        <end position="53"/>
    </location>
    <ligand>
        <name>GTP</name>
        <dbReference type="ChEBI" id="CHEBI:37565"/>
    </ligand>
</feature>
<feature type="binding site" evidence="1">
    <location>
        <position position="54"/>
    </location>
    <ligand>
        <name>Zn(2+)</name>
        <dbReference type="ChEBI" id="CHEBI:29105"/>
        <note>catalytic</note>
    </ligand>
</feature>
<feature type="binding site" evidence="1">
    <location>
        <position position="65"/>
    </location>
    <ligand>
        <name>Zn(2+)</name>
        <dbReference type="ChEBI" id="CHEBI:29105"/>
        <note>catalytic</note>
    </ligand>
</feature>
<feature type="binding site" evidence="1">
    <location>
        <position position="67"/>
    </location>
    <ligand>
        <name>Zn(2+)</name>
        <dbReference type="ChEBI" id="CHEBI:29105"/>
        <note>catalytic</note>
    </ligand>
</feature>
<feature type="binding site" evidence="1">
    <location>
        <position position="70"/>
    </location>
    <ligand>
        <name>GTP</name>
        <dbReference type="ChEBI" id="CHEBI:37565"/>
    </ligand>
</feature>
<feature type="binding site" evidence="1">
    <location>
        <begin position="92"/>
        <end position="94"/>
    </location>
    <ligand>
        <name>GTP</name>
        <dbReference type="ChEBI" id="CHEBI:37565"/>
    </ligand>
</feature>
<feature type="binding site" evidence="1">
    <location>
        <position position="114"/>
    </location>
    <ligand>
        <name>GTP</name>
        <dbReference type="ChEBI" id="CHEBI:37565"/>
    </ligand>
</feature>
<feature type="binding site" evidence="1">
    <location>
        <position position="149"/>
    </location>
    <ligand>
        <name>GTP</name>
        <dbReference type="ChEBI" id="CHEBI:37565"/>
    </ligand>
</feature>
<feature type="binding site" evidence="1">
    <location>
        <position position="154"/>
    </location>
    <ligand>
        <name>GTP</name>
        <dbReference type="ChEBI" id="CHEBI:37565"/>
    </ligand>
</feature>
<evidence type="ECO:0000255" key="1">
    <source>
        <dbReference type="HAMAP-Rule" id="MF_00179"/>
    </source>
</evidence>
<keyword id="KW-0342">GTP-binding</keyword>
<keyword id="KW-0378">Hydrolase</keyword>
<keyword id="KW-0479">Metal-binding</keyword>
<keyword id="KW-0547">Nucleotide-binding</keyword>
<keyword id="KW-0686">Riboflavin biosynthesis</keyword>
<keyword id="KW-0862">Zinc</keyword>
<reference key="1">
    <citation type="journal article" date="2009" name="PLoS Genet.">
        <title>Organised genome dynamics in the Escherichia coli species results in highly diverse adaptive paths.</title>
        <authorList>
            <person name="Touchon M."/>
            <person name="Hoede C."/>
            <person name="Tenaillon O."/>
            <person name="Barbe V."/>
            <person name="Baeriswyl S."/>
            <person name="Bidet P."/>
            <person name="Bingen E."/>
            <person name="Bonacorsi S."/>
            <person name="Bouchier C."/>
            <person name="Bouvet O."/>
            <person name="Calteau A."/>
            <person name="Chiapello H."/>
            <person name="Clermont O."/>
            <person name="Cruveiller S."/>
            <person name="Danchin A."/>
            <person name="Diard M."/>
            <person name="Dossat C."/>
            <person name="Karoui M.E."/>
            <person name="Frapy E."/>
            <person name="Garry L."/>
            <person name="Ghigo J.M."/>
            <person name="Gilles A.M."/>
            <person name="Johnson J."/>
            <person name="Le Bouguenec C."/>
            <person name="Lescat M."/>
            <person name="Mangenot S."/>
            <person name="Martinez-Jehanne V."/>
            <person name="Matic I."/>
            <person name="Nassif X."/>
            <person name="Oztas S."/>
            <person name="Petit M.A."/>
            <person name="Pichon C."/>
            <person name="Rouy Z."/>
            <person name="Ruf C.S."/>
            <person name="Schneider D."/>
            <person name="Tourret J."/>
            <person name="Vacherie B."/>
            <person name="Vallenet D."/>
            <person name="Medigue C."/>
            <person name="Rocha E.P.C."/>
            <person name="Denamur E."/>
        </authorList>
    </citation>
    <scope>NUCLEOTIDE SEQUENCE [LARGE SCALE GENOMIC DNA]</scope>
    <source>
        <strain>ATCC 35469 / DSM 13698 / BCRC 15582 / CCUG 18766 / IAM 14443 / JCM 21226 / LMG 7866 / NBRC 102419 / NCTC 12128 / CDC 0568-73</strain>
    </source>
</reference>
<comment type="function">
    <text evidence="1">Catalyzes the conversion of GTP to 2,5-diamino-6-ribosylamino-4(3H)-pyrimidinone 5'-phosphate (DARP), formate and pyrophosphate.</text>
</comment>
<comment type="catalytic activity">
    <reaction evidence="1">
        <text>GTP + 4 H2O = 2,5-diamino-6-hydroxy-4-(5-phosphoribosylamino)-pyrimidine + formate + 2 phosphate + 3 H(+)</text>
        <dbReference type="Rhea" id="RHEA:23704"/>
        <dbReference type="ChEBI" id="CHEBI:15377"/>
        <dbReference type="ChEBI" id="CHEBI:15378"/>
        <dbReference type="ChEBI" id="CHEBI:15740"/>
        <dbReference type="ChEBI" id="CHEBI:37565"/>
        <dbReference type="ChEBI" id="CHEBI:43474"/>
        <dbReference type="ChEBI" id="CHEBI:58614"/>
        <dbReference type="EC" id="3.5.4.25"/>
    </reaction>
</comment>
<comment type="cofactor">
    <cofactor evidence="1">
        <name>Zn(2+)</name>
        <dbReference type="ChEBI" id="CHEBI:29105"/>
    </cofactor>
    <text evidence="1">Binds 1 zinc ion per subunit.</text>
</comment>
<comment type="pathway">
    <text evidence="1">Cofactor biosynthesis; riboflavin biosynthesis; 5-amino-6-(D-ribitylamino)uracil from GTP: step 1/4.</text>
</comment>
<comment type="subunit">
    <text evidence="1">Homodimer.</text>
</comment>
<comment type="similarity">
    <text evidence="1">Belongs to the GTP cyclohydrolase II family.</text>
</comment>